<organism>
    <name type="scientific">Escherichia coli (strain K12)</name>
    <dbReference type="NCBI Taxonomy" id="83333"/>
    <lineage>
        <taxon>Bacteria</taxon>
        <taxon>Pseudomonadati</taxon>
        <taxon>Pseudomonadota</taxon>
        <taxon>Gammaproteobacteria</taxon>
        <taxon>Enterobacterales</taxon>
        <taxon>Enterobacteriaceae</taxon>
        <taxon>Escherichia</taxon>
    </lineage>
</organism>
<protein>
    <recommendedName>
        <fullName>N-acetylmuramoyl-L-alanine amidase AmiA</fullName>
        <ecNumber>3.5.1.28</ecNumber>
    </recommendedName>
</protein>
<evidence type="ECO:0000255" key="1"/>
<evidence type="ECO:0000255" key="2">
    <source>
        <dbReference type="PROSITE-ProRule" id="PRU00648"/>
    </source>
</evidence>
<evidence type="ECO:0000256" key="3">
    <source>
        <dbReference type="SAM" id="MobiDB-lite"/>
    </source>
</evidence>
<evidence type="ECO:0000269" key="4">
    <source>
    </source>
</evidence>
<evidence type="ECO:0000269" key="5">
    <source>
    </source>
</evidence>
<evidence type="ECO:0000269" key="6">
    <source>
    </source>
</evidence>
<evidence type="ECO:0000305" key="7"/>
<evidence type="ECO:0007829" key="8">
    <source>
        <dbReference type="PDB" id="8C2O"/>
    </source>
</evidence>
<feature type="signal peptide" description="Tat-type signal" evidence="2">
    <location>
        <begin position="1"/>
        <end position="34"/>
    </location>
</feature>
<feature type="chain" id="PRO_0000006460" description="N-acetylmuramoyl-L-alanine amidase AmiA">
    <location>
        <begin position="35"/>
        <end position="289"/>
    </location>
</feature>
<feature type="domain" description="MurNAc-LAA" evidence="1">
    <location>
        <begin position="59"/>
        <end position="273"/>
    </location>
</feature>
<feature type="region of interest" description="Disordered" evidence="3">
    <location>
        <begin position="39"/>
        <end position="63"/>
    </location>
</feature>
<feature type="compositionally biased region" description="Basic residues" evidence="3">
    <location>
        <begin position="46"/>
        <end position="55"/>
    </location>
</feature>
<feature type="strand" evidence="8">
    <location>
        <begin position="58"/>
        <end position="63"/>
    </location>
</feature>
<feature type="helix" evidence="8">
    <location>
        <begin position="80"/>
        <end position="97"/>
    </location>
</feature>
<feature type="strand" evidence="8">
    <location>
        <begin position="101"/>
        <end position="105"/>
    </location>
</feature>
<feature type="strand" evidence="8">
    <location>
        <begin position="107"/>
        <end position="109"/>
    </location>
</feature>
<feature type="helix" evidence="8">
    <location>
        <begin position="114"/>
        <end position="123"/>
    </location>
</feature>
<feature type="strand" evidence="8">
    <location>
        <begin position="127"/>
        <end position="133"/>
    </location>
</feature>
<feature type="strand" evidence="8">
    <location>
        <begin position="144"/>
        <end position="150"/>
    </location>
</feature>
<feature type="helix" evidence="8">
    <location>
        <begin position="158"/>
        <end position="168"/>
    </location>
</feature>
<feature type="helix" evidence="8">
    <location>
        <begin position="169"/>
        <end position="174"/>
    </location>
</feature>
<feature type="helix" evidence="8">
    <location>
        <begin position="180"/>
        <end position="191"/>
    </location>
</feature>
<feature type="helix" evidence="8">
    <location>
        <begin position="195"/>
        <end position="212"/>
    </location>
</feature>
<feature type="turn" evidence="8">
    <location>
        <begin position="213"/>
        <end position="215"/>
    </location>
</feature>
<feature type="strand" evidence="8">
    <location>
        <begin position="224"/>
        <end position="226"/>
    </location>
</feature>
<feature type="helix" evidence="8">
    <location>
        <begin position="229"/>
        <end position="231"/>
    </location>
</feature>
<feature type="strand" evidence="8">
    <location>
        <begin position="234"/>
        <end position="236"/>
    </location>
</feature>
<feature type="strand" evidence="8">
    <location>
        <begin position="238"/>
        <end position="242"/>
    </location>
</feature>
<feature type="helix" evidence="8">
    <location>
        <begin position="249"/>
        <end position="255"/>
    </location>
</feature>
<feature type="helix" evidence="8">
    <location>
        <begin position="258"/>
        <end position="281"/>
    </location>
</feature>
<reference key="1">
    <citation type="journal article" date="1994" name="J. Bacteriol.">
        <title>Isolation of the hemF operon containing the gene for the Escherichia coli aerobic coproporphyrinogen III oxidase by in vivo complementation of a yeast HEM13 mutant.</title>
        <authorList>
            <person name="Troup B."/>
            <person name="Jahn M."/>
            <person name="Hungerer C."/>
            <person name="Jahn D."/>
        </authorList>
    </citation>
    <scope>NUCLEOTIDE SEQUENCE [GENOMIC DNA]</scope>
    <source>
        <strain>K12</strain>
    </source>
</reference>
<reference key="2">
    <citation type="journal article" date="1997" name="DNA Res.">
        <title>Construction of a contiguous 874-kb sequence of the Escherichia coli-K12 genome corresponding to 50.0-68.8 min on the linkage map and analysis of its sequence features.</title>
        <authorList>
            <person name="Yamamoto Y."/>
            <person name="Aiba H."/>
            <person name="Baba T."/>
            <person name="Hayashi K."/>
            <person name="Inada T."/>
            <person name="Isono K."/>
            <person name="Itoh T."/>
            <person name="Kimura S."/>
            <person name="Kitagawa M."/>
            <person name="Makino K."/>
            <person name="Miki T."/>
            <person name="Mitsuhashi N."/>
            <person name="Mizobuchi K."/>
            <person name="Mori H."/>
            <person name="Nakade S."/>
            <person name="Nakamura Y."/>
            <person name="Nashimoto H."/>
            <person name="Oshima T."/>
            <person name="Oyama S."/>
            <person name="Saito N."/>
            <person name="Sampei G."/>
            <person name="Satoh Y."/>
            <person name="Sivasundaram S."/>
            <person name="Tagami H."/>
            <person name="Takahashi H."/>
            <person name="Takeda J."/>
            <person name="Takemoto K."/>
            <person name="Uehara K."/>
            <person name="Wada C."/>
            <person name="Yamagata S."/>
            <person name="Horiuchi T."/>
        </authorList>
    </citation>
    <scope>NUCLEOTIDE SEQUENCE [LARGE SCALE GENOMIC DNA]</scope>
    <source>
        <strain>K12 / W3110 / ATCC 27325 / DSM 5911</strain>
    </source>
</reference>
<reference key="3">
    <citation type="journal article" date="1997" name="Science">
        <title>The complete genome sequence of Escherichia coli K-12.</title>
        <authorList>
            <person name="Blattner F.R."/>
            <person name="Plunkett G. III"/>
            <person name="Bloch C.A."/>
            <person name="Perna N.T."/>
            <person name="Burland V."/>
            <person name="Riley M."/>
            <person name="Collado-Vides J."/>
            <person name="Glasner J.D."/>
            <person name="Rode C.K."/>
            <person name="Mayhew G.F."/>
            <person name="Gregor J."/>
            <person name="Davis N.W."/>
            <person name="Kirkpatrick H.A."/>
            <person name="Goeden M.A."/>
            <person name="Rose D.J."/>
            <person name="Mau B."/>
            <person name="Shao Y."/>
        </authorList>
    </citation>
    <scope>NUCLEOTIDE SEQUENCE [LARGE SCALE GENOMIC DNA]</scope>
    <source>
        <strain>K12 / MG1655 / ATCC 47076</strain>
    </source>
</reference>
<reference key="4">
    <citation type="journal article" date="2006" name="Mol. Syst. Biol.">
        <title>Highly accurate genome sequences of Escherichia coli K-12 strains MG1655 and W3110.</title>
        <authorList>
            <person name="Hayashi K."/>
            <person name="Morooka N."/>
            <person name="Yamamoto Y."/>
            <person name="Fujita K."/>
            <person name="Isono K."/>
            <person name="Choi S."/>
            <person name="Ohtsubo E."/>
            <person name="Baba T."/>
            <person name="Wanner B.L."/>
            <person name="Mori H."/>
            <person name="Horiuchi T."/>
        </authorList>
    </citation>
    <scope>NUCLEOTIDE SEQUENCE [LARGE SCALE GENOMIC DNA]</scope>
    <source>
        <strain>K12 / W3110 / ATCC 27325 / DSM 5911</strain>
    </source>
</reference>
<reference key="5">
    <citation type="journal article" date="1991" name="Mol. Gen. Genet.">
        <title>Systematic characterization of curved DNA segments randomly cloned from Escherichia coli and their functional significance.</title>
        <authorList>
            <person name="Tanaka K."/>
            <person name="Muramatsu S."/>
            <person name="Yamada H."/>
            <person name="Mizuno T."/>
        </authorList>
    </citation>
    <scope>NUCLEOTIDE SEQUENCE [GENOMIC DNA] OF 1-19</scope>
</reference>
<reference key="6">
    <citation type="journal article" date="2001" name="Mol. Microbiol.">
        <title>Involvement of N-acetylmuramyl-L-alanine amidases in cell separation and antibiotic-induced autolysis of Escherichia coli.</title>
        <authorList>
            <person name="Heidrich C."/>
            <person name="Templin M.F."/>
            <person name="Ursinus A."/>
            <person name="Merdanovic M."/>
            <person name="Berger J."/>
            <person name="Schwarz H."/>
            <person name="de Pedro M.A."/>
            <person name="Holtje J.V."/>
        </authorList>
    </citation>
    <scope>FUNCTION AS AN AMIDASE</scope>
    <scope>DISRUPTION PHENOTYPE</scope>
    <source>
        <strain>K12 / MC1061 / ATCC 53338 / DSM 7140</strain>
    </source>
</reference>
<reference key="7">
    <citation type="journal article" date="2003" name="Mol. Microbiol.">
        <title>The Escherichia coli amidase AmiC is a periplasmic septal ring component exported via the twin-arginine transport pathway.</title>
        <authorList>
            <person name="Bernhardt T.G."/>
            <person name="de Boer P.A."/>
        </authorList>
    </citation>
    <scope>SUBCELLULAR LOCATION</scope>
    <scope>EXPORT VIA THE TAT-SYSTEM</scope>
    <source>
        <strain>K12</strain>
    </source>
</reference>
<reference key="8">
    <citation type="journal article" date="2007" name="J. Biol. Chem.">
        <title>Export pathway selectivity of Escherichia coli twin arginine translocation signal peptides.</title>
        <authorList>
            <person name="Tullman-Ercek D."/>
            <person name="DeLisa M.P."/>
            <person name="Kawarasaki Y."/>
            <person name="Iranpour P."/>
            <person name="Ribnicky B."/>
            <person name="Palmer T."/>
            <person name="Georgiou G."/>
        </authorList>
    </citation>
    <scope>EXPORT VIA THE TAT-SYSTEM AND THE SEC-SYSTEM</scope>
</reference>
<reference key="9">
    <citation type="journal article" date="2008" name="J. Bacteriol.">
        <title>Growth of Escherichia coli: significance of peptidoglycan degradation during elongation and septation.</title>
        <authorList>
            <person name="Uehara T."/>
            <person name="Park J.T."/>
        </authorList>
    </citation>
    <scope>FUNCTION</scope>
    <source>
        <strain>K12</strain>
    </source>
</reference>
<gene>
    <name type="primary">amiA</name>
    <name type="synonym">yfeE</name>
    <name type="ordered locus">b2435</name>
    <name type="ordered locus">JW2428</name>
</gene>
<name>AMIA_ECOLI</name>
<proteinExistence type="evidence at protein level"/>
<keyword id="KW-0002">3D-structure</keyword>
<keyword id="KW-0961">Cell wall biogenesis/degradation</keyword>
<keyword id="KW-0378">Hydrolase</keyword>
<keyword id="KW-0574">Periplasm</keyword>
<keyword id="KW-1185">Reference proteome</keyword>
<keyword id="KW-0732">Signal</keyword>
<comment type="function">
    <text evidence="4 6">Cell-wall hydrolase involved in septum cleavage during cell division. Can also act as powerful autolysin in the presence of murein synthesis inhibitors.</text>
</comment>
<comment type="catalytic activity">
    <reaction>
        <text>Hydrolyzes the link between N-acetylmuramoyl residues and L-amino acid residues in certain cell-wall glycopeptides.</text>
        <dbReference type="EC" id="3.5.1.28"/>
    </reaction>
</comment>
<comment type="subcellular location">
    <subcellularLocation>
        <location evidence="5">Periplasm</location>
    </subcellularLocation>
    <text>Distributed throughout the periplasm in all cells.</text>
</comment>
<comment type="PTM">
    <text>Exported by the Tat system. The position of the signal peptide cleavage has not been experimentally proven. Can also be exported by the Sec system.</text>
</comment>
<comment type="disruption phenotype">
    <text evidence="4">Mutants are growing in chains of 3 to 6 cells.</text>
</comment>
<comment type="similarity">
    <text evidence="7">Belongs to the N-acetylmuramoyl-L-alanine amidase 3 family.</text>
</comment>
<dbReference type="EC" id="3.5.1.28"/>
<dbReference type="EMBL" id="X75413">
    <property type="protein sequence ID" value="CAA53166.1"/>
    <property type="molecule type" value="Genomic_DNA"/>
</dbReference>
<dbReference type="EMBL" id="U00096">
    <property type="protein sequence ID" value="AAC75488.1"/>
    <property type="molecule type" value="Genomic_DNA"/>
</dbReference>
<dbReference type="EMBL" id="AP009048">
    <property type="protein sequence ID" value="BAA16318.1"/>
    <property type="molecule type" value="Genomic_DNA"/>
</dbReference>
<dbReference type="EMBL" id="X63986">
    <property type="protein sequence ID" value="CAB57860.1"/>
    <property type="molecule type" value="Genomic_DNA"/>
</dbReference>
<dbReference type="PIR" id="A36964">
    <property type="entry name" value="A36964"/>
</dbReference>
<dbReference type="RefSeq" id="NP_416930.1">
    <property type="nucleotide sequence ID" value="NC_000913.3"/>
</dbReference>
<dbReference type="RefSeq" id="WP_000102886.1">
    <property type="nucleotide sequence ID" value="NZ_LN832404.1"/>
</dbReference>
<dbReference type="PDB" id="8C2O">
    <property type="method" value="X-ray"/>
    <property type="resolution" value="2.35 A"/>
    <property type="chains" value="A/B=35-289"/>
</dbReference>
<dbReference type="PDBsum" id="8C2O"/>
<dbReference type="SMR" id="P36548"/>
<dbReference type="BioGRID" id="4259617">
    <property type="interactions" value="397"/>
</dbReference>
<dbReference type="DIP" id="DIP-9098N"/>
<dbReference type="FunCoup" id="P36548">
    <property type="interactions" value="241"/>
</dbReference>
<dbReference type="IntAct" id="P36548">
    <property type="interactions" value="9"/>
</dbReference>
<dbReference type="STRING" id="511145.b2435"/>
<dbReference type="jPOST" id="P36548"/>
<dbReference type="PaxDb" id="511145-b2435"/>
<dbReference type="EnsemblBacteria" id="AAC75488">
    <property type="protein sequence ID" value="AAC75488"/>
    <property type="gene ID" value="b2435"/>
</dbReference>
<dbReference type="GeneID" id="946916"/>
<dbReference type="KEGG" id="ecj:JW2428"/>
<dbReference type="KEGG" id="eco:b2435"/>
<dbReference type="KEGG" id="ecoc:C3026_13525"/>
<dbReference type="PATRIC" id="fig|1411691.4.peg.4296"/>
<dbReference type="EchoBASE" id="EB1770"/>
<dbReference type="eggNOG" id="COG0860">
    <property type="taxonomic scope" value="Bacteria"/>
</dbReference>
<dbReference type="HOGENOM" id="CLU_014322_4_1_6"/>
<dbReference type="InParanoid" id="P36548"/>
<dbReference type="OMA" id="QIRPVHH"/>
<dbReference type="OrthoDB" id="9806267at2"/>
<dbReference type="PhylomeDB" id="P36548"/>
<dbReference type="BioCyc" id="EcoCyc:NACMURLALAAMI1-MONOMER"/>
<dbReference type="BioCyc" id="MetaCyc:NACMURLALAAMI1-MONOMER"/>
<dbReference type="PHI-base" id="PHI:10979"/>
<dbReference type="PRO" id="PR:P36548"/>
<dbReference type="Proteomes" id="UP000000625">
    <property type="component" value="Chromosome"/>
</dbReference>
<dbReference type="GO" id="GO:0030288">
    <property type="term" value="C:outer membrane-bounded periplasmic space"/>
    <property type="evidence" value="ECO:0000314"/>
    <property type="project" value="EcoCyc"/>
</dbReference>
<dbReference type="GO" id="GO:0042597">
    <property type="term" value="C:periplasmic space"/>
    <property type="evidence" value="ECO:0000314"/>
    <property type="project" value="EcoliWiki"/>
</dbReference>
<dbReference type="GO" id="GO:0008745">
    <property type="term" value="F:N-acetylmuramoyl-L-alanine amidase activity"/>
    <property type="evidence" value="ECO:0000314"/>
    <property type="project" value="EcoCyc"/>
</dbReference>
<dbReference type="GO" id="GO:0008270">
    <property type="term" value="F:zinc ion binding"/>
    <property type="evidence" value="ECO:0000314"/>
    <property type="project" value="EcoCyc"/>
</dbReference>
<dbReference type="GO" id="GO:0051301">
    <property type="term" value="P:cell division"/>
    <property type="evidence" value="ECO:0000269"/>
    <property type="project" value="EcoCyc"/>
</dbReference>
<dbReference type="GO" id="GO:0071555">
    <property type="term" value="P:cell wall organization"/>
    <property type="evidence" value="ECO:0007669"/>
    <property type="project" value="UniProtKB-KW"/>
</dbReference>
<dbReference type="GO" id="GO:0071236">
    <property type="term" value="P:cellular response to antibiotic"/>
    <property type="evidence" value="ECO:0000269"/>
    <property type="project" value="EcoCyc"/>
</dbReference>
<dbReference type="GO" id="GO:0043093">
    <property type="term" value="P:FtsZ-dependent cytokinesis"/>
    <property type="evidence" value="ECO:0000318"/>
    <property type="project" value="GO_Central"/>
</dbReference>
<dbReference type="GO" id="GO:0009253">
    <property type="term" value="P:peptidoglycan catabolic process"/>
    <property type="evidence" value="ECO:0007669"/>
    <property type="project" value="InterPro"/>
</dbReference>
<dbReference type="CDD" id="cd02696">
    <property type="entry name" value="MurNAc-LAA"/>
    <property type="match status" value="1"/>
</dbReference>
<dbReference type="FunFam" id="3.40.630.40:FF:000002">
    <property type="entry name" value="N-acetylmuramoyl-L-alanine amidase AmiA"/>
    <property type="match status" value="1"/>
</dbReference>
<dbReference type="Gene3D" id="3.40.630.40">
    <property type="entry name" value="Zn-dependent exopeptidases"/>
    <property type="match status" value="1"/>
</dbReference>
<dbReference type="InterPro" id="IPR002508">
    <property type="entry name" value="MurNAc-LAA_cat"/>
</dbReference>
<dbReference type="InterPro" id="IPR050695">
    <property type="entry name" value="N-acetylmuramoyl_amidase_3"/>
</dbReference>
<dbReference type="InterPro" id="IPR006311">
    <property type="entry name" value="TAT_signal"/>
</dbReference>
<dbReference type="NCBIfam" id="NF007652">
    <property type="entry name" value="PRK10319.1"/>
    <property type="match status" value="1"/>
</dbReference>
<dbReference type="PANTHER" id="PTHR30404">
    <property type="entry name" value="N-ACETYLMURAMOYL-L-ALANINE AMIDASE"/>
    <property type="match status" value="1"/>
</dbReference>
<dbReference type="PANTHER" id="PTHR30404:SF2">
    <property type="entry name" value="N-ACETYLMURAMOYL-L-ALANINE AMIDASE AMIA"/>
    <property type="match status" value="1"/>
</dbReference>
<dbReference type="Pfam" id="PF01520">
    <property type="entry name" value="Amidase_3"/>
    <property type="match status" value="1"/>
</dbReference>
<dbReference type="SMART" id="SM00646">
    <property type="entry name" value="Ami_3"/>
    <property type="match status" value="1"/>
</dbReference>
<dbReference type="SUPFAM" id="SSF53187">
    <property type="entry name" value="Zn-dependent exopeptidases"/>
    <property type="match status" value="1"/>
</dbReference>
<dbReference type="PROSITE" id="PS51318">
    <property type="entry name" value="TAT"/>
    <property type="match status" value="1"/>
</dbReference>
<sequence>MSTFKPLKTLTSRRQVLKAGLAALTLSGMSQAIAKDELLKTSNGHSKPKAKKSGGKRVVVLDPGHGGIDTGAIGRNGSKEKHVVLAIAKNVRSILRNHGIDARLTRSGDTFIPLYDRVEIAHKHGADLFMSIHADGFTNPKAAGASVFALSNRGASSAMAKYLSERENRADEVAGKKATDKDHLLQQVLFDLVQTDTIKNSLTLGSHILKKIKPVHKLHSRNTEQAAFVVLKSPSVPSVLVETSFITNPEEERLLGTAAFRQKIATAIAEGVISYFHWFDNQKAHSKKR</sequence>
<accession>P36548</accession>
<accession>P78199</accession>